<protein>
    <recommendedName>
        <fullName evidence="7">Major intrinsically disordered NOTCH2-binding receptor 1-like homolog</fullName>
    </recommendedName>
    <alternativeName>
        <fullName evidence="6">Major intrinsically disordered NOTCH2-associated receptor 2</fullName>
    </alternativeName>
    <alternativeName>
        <fullName evidence="8">Membrane integral NOTCH2-associated receptor 2</fullName>
    </alternativeName>
</protein>
<gene>
    <name evidence="8" type="primary">Minar2</name>
</gene>
<sequence length="193" mass="21854">MKGDMDLSVLPNNNHPDKFLQLDVKSLMRSSTLLQASLARFPGGNYPATQHWQNLVYSQREKTIATQRIKGFGVENPVLPESPPASMSSVMKNNPLYGDITLEEAMEERKKSPSWTIEEYDKHSVHTNLSGHLKENPNDLRFWLGDTYTPGFDTLLKKKKKRNKRSKLCHMGLILLLVASILVTIVTLSTIFS</sequence>
<proteinExistence type="evidence at protein level"/>
<evidence type="ECO:0000250" key="1">
    <source>
        <dbReference type="UniProtKB" id="F1QEA1"/>
    </source>
</evidence>
<evidence type="ECO:0000250" key="2">
    <source>
        <dbReference type="UniProtKB" id="P59773"/>
    </source>
</evidence>
<evidence type="ECO:0000255" key="3"/>
<evidence type="ECO:0000269" key="4">
    <source>
    </source>
</evidence>
<evidence type="ECO:0000269" key="5">
    <source>
    </source>
</evidence>
<evidence type="ECO:0000303" key="6">
    <source>
    </source>
</evidence>
<evidence type="ECO:0000305" key="7"/>
<evidence type="ECO:0000312" key="8">
    <source>
        <dbReference type="MGI" id="MGI:2442934"/>
    </source>
</evidence>
<evidence type="ECO:0007744" key="9">
    <source>
    </source>
</evidence>
<accession>Q8C4X7</accession>
<accession>A0A0R4J0Q0</accession>
<accession>E9Q5J6</accession>
<accession>Q6DI98</accession>
<keyword id="KW-0025">Alternative splicing</keyword>
<keyword id="KW-0256">Endoplasmic reticulum</keyword>
<keyword id="KW-0325">Glycoprotein</keyword>
<keyword id="KW-0458">Lysosome</keyword>
<keyword id="KW-0472">Membrane</keyword>
<keyword id="KW-0597">Phosphoprotein</keyword>
<keyword id="KW-1185">Reference proteome</keyword>
<keyword id="KW-0812">Transmembrane</keyword>
<keyword id="KW-1133">Transmembrane helix</keyword>
<dbReference type="EMBL" id="AK080452">
    <property type="protein sequence ID" value="BAC37921.1"/>
    <property type="molecule type" value="mRNA"/>
</dbReference>
<dbReference type="EMBL" id="AC132242">
    <property type="status" value="NOT_ANNOTATED_CDS"/>
    <property type="molecule type" value="Genomic_DNA"/>
</dbReference>
<dbReference type="EMBL" id="CH466528">
    <property type="protein sequence ID" value="EDL09843.1"/>
    <property type="molecule type" value="Genomic_DNA"/>
</dbReference>
<dbReference type="EMBL" id="CH466528">
    <property type="protein sequence ID" value="EDL09844.1"/>
    <property type="molecule type" value="Genomic_DNA"/>
</dbReference>
<dbReference type="EMBL" id="BC075669">
    <property type="protein sequence ID" value="AAH75669.1"/>
    <property type="molecule type" value="mRNA"/>
</dbReference>
<dbReference type="CCDS" id="CCDS29267.2">
    <molecule id="Q8C4X7-1"/>
</dbReference>
<dbReference type="RefSeq" id="NP_776120.3">
    <molecule id="Q8C4X7-1"/>
    <property type="nucleotide sequence ID" value="NM_173759.5"/>
</dbReference>
<dbReference type="RefSeq" id="XP_006525941.1">
    <molecule id="Q8C4X7-2"/>
    <property type="nucleotide sequence ID" value="XM_006525878.5"/>
</dbReference>
<dbReference type="SMR" id="Q8C4X7"/>
<dbReference type="FunCoup" id="Q8C4X7">
    <property type="interactions" value="6"/>
</dbReference>
<dbReference type="STRING" id="10090.ENSMUSP00000125952"/>
<dbReference type="GlyGen" id="Q8C4X7">
    <property type="glycosylation" value="1 site"/>
</dbReference>
<dbReference type="iPTMnet" id="Q8C4X7"/>
<dbReference type="PhosphoSitePlus" id="Q8C4X7"/>
<dbReference type="SwissPalm" id="Q8C4X7"/>
<dbReference type="jPOST" id="Q8C4X7"/>
<dbReference type="PaxDb" id="10090-ENSMUSP00000125952"/>
<dbReference type="ProteomicsDB" id="333102"/>
<dbReference type="ProteomicsDB" id="357308"/>
<dbReference type="Antibodypedia" id="2707">
    <property type="antibodies" value="6 antibodies from 6 providers"/>
</dbReference>
<dbReference type="DNASU" id="225583"/>
<dbReference type="Ensembl" id="ENSMUST00000058633.9">
    <molecule id="Q8C4X7-2"/>
    <property type="protein sequence ID" value="ENSMUSP00000056379.3"/>
    <property type="gene ID" value="ENSMUSG00000050875.12"/>
</dbReference>
<dbReference type="Ensembl" id="ENSMUST00000118510.8">
    <molecule id="Q8C4X7-2"/>
    <property type="protein sequence ID" value="ENSMUSP00000113023.2"/>
    <property type="gene ID" value="ENSMUSG00000050875.12"/>
</dbReference>
<dbReference type="Ensembl" id="ENSMUST00000165666.9">
    <molecule id="Q8C4X7-1"/>
    <property type="protein sequence ID" value="ENSMUSP00000125952.3"/>
    <property type="gene ID" value="ENSMUSG00000050875.12"/>
</dbReference>
<dbReference type="Ensembl" id="ENSMUST00000175830.2">
    <molecule id="Q8C4X7-2"/>
    <property type="protein sequence ID" value="ENSMUSP00000135330.2"/>
    <property type="gene ID" value="ENSMUSG00000050875.12"/>
</dbReference>
<dbReference type="GeneID" id="225583"/>
<dbReference type="KEGG" id="mmu:225583"/>
<dbReference type="AGR" id="MGI:2442934"/>
<dbReference type="CTD" id="100127206"/>
<dbReference type="MGI" id="MGI:2442934">
    <property type="gene designation" value="Minar2"/>
</dbReference>
<dbReference type="VEuPathDB" id="HostDB:ENSMUSG00000050875"/>
<dbReference type="eggNOG" id="ENOG502RZQB">
    <property type="taxonomic scope" value="Eukaryota"/>
</dbReference>
<dbReference type="GeneTree" id="ENSGT00530000063851"/>
<dbReference type="HOGENOM" id="CLU_120056_0_0_1"/>
<dbReference type="InParanoid" id="Q8C4X7"/>
<dbReference type="OMA" id="ATHGMFQ"/>
<dbReference type="OrthoDB" id="8920945at2759"/>
<dbReference type="PhylomeDB" id="Q8C4X7"/>
<dbReference type="BioGRID-ORCS" id="225583">
    <property type="hits" value="0 hits in 78 CRISPR screens"/>
</dbReference>
<dbReference type="PRO" id="PR:Q8C4X7"/>
<dbReference type="Proteomes" id="UP000000589">
    <property type="component" value="Chromosome 18"/>
</dbReference>
<dbReference type="RNAct" id="Q8C4X7">
    <property type="molecule type" value="protein"/>
</dbReference>
<dbReference type="Bgee" id="ENSMUSG00000050875">
    <property type="expression patterns" value="Expressed in optic fissure and 174 other cell types or tissues"/>
</dbReference>
<dbReference type="ExpressionAtlas" id="Q8C4X7">
    <property type="expression patterns" value="baseline and differential"/>
</dbReference>
<dbReference type="GO" id="GO:0005783">
    <property type="term" value="C:endoplasmic reticulum"/>
    <property type="evidence" value="ECO:0000314"/>
    <property type="project" value="MGI"/>
</dbReference>
<dbReference type="GO" id="GO:0005789">
    <property type="term" value="C:endoplasmic reticulum membrane"/>
    <property type="evidence" value="ECO:0007669"/>
    <property type="project" value="UniProtKB-SubCell"/>
</dbReference>
<dbReference type="GO" id="GO:0005765">
    <property type="term" value="C:lysosomal membrane"/>
    <property type="evidence" value="ECO:0000314"/>
    <property type="project" value="UniProtKB"/>
</dbReference>
<dbReference type="GO" id="GO:0032420">
    <property type="term" value="C:stereocilium"/>
    <property type="evidence" value="ECO:0000315"/>
    <property type="project" value="MGI"/>
</dbReference>
<dbReference type="GO" id="GO:0015485">
    <property type="term" value="F:cholesterol binding"/>
    <property type="evidence" value="ECO:0000250"/>
    <property type="project" value="UniProtKB"/>
</dbReference>
<dbReference type="GO" id="GO:0001525">
    <property type="term" value="P:angiogenesis"/>
    <property type="evidence" value="ECO:0000250"/>
    <property type="project" value="UniProtKB"/>
</dbReference>
<dbReference type="GO" id="GO:0006915">
    <property type="term" value="P:apoptotic process"/>
    <property type="evidence" value="ECO:0000315"/>
    <property type="project" value="MGI"/>
</dbReference>
<dbReference type="GO" id="GO:0042632">
    <property type="term" value="P:cholesterol homeostasis"/>
    <property type="evidence" value="ECO:0000250"/>
    <property type="project" value="UniProtKB"/>
</dbReference>
<dbReference type="GO" id="GO:0035640">
    <property type="term" value="P:exploration behavior"/>
    <property type="evidence" value="ECO:0000315"/>
    <property type="project" value="MGI"/>
</dbReference>
<dbReference type="GO" id="GO:0010467">
    <property type="term" value="P:gene expression"/>
    <property type="evidence" value="ECO:0000315"/>
    <property type="project" value="MGI"/>
</dbReference>
<dbReference type="GO" id="GO:0048873">
    <property type="term" value="P:homeostasis of number of cells within a tissue"/>
    <property type="evidence" value="ECO:0000315"/>
    <property type="project" value="MGI"/>
</dbReference>
<dbReference type="GO" id="GO:0042491">
    <property type="term" value="P:inner ear auditory receptor cell differentiation"/>
    <property type="evidence" value="ECO:0000315"/>
    <property type="project" value="MGI"/>
</dbReference>
<dbReference type="GO" id="GO:0060113">
    <property type="term" value="P:inner ear receptor cell differentiation"/>
    <property type="evidence" value="ECO:0000315"/>
    <property type="project" value="MGI"/>
</dbReference>
<dbReference type="GO" id="GO:0060122">
    <property type="term" value="P:inner ear receptor cell stereocilium organization"/>
    <property type="evidence" value="ECO:0000315"/>
    <property type="project" value="MGI"/>
</dbReference>
<dbReference type="GO" id="GO:0007626">
    <property type="term" value="P:locomotory behavior"/>
    <property type="evidence" value="ECO:0000315"/>
    <property type="project" value="MGI"/>
</dbReference>
<dbReference type="GO" id="GO:0051402">
    <property type="term" value="P:neuron apoptotic process"/>
    <property type="evidence" value="ECO:0000315"/>
    <property type="project" value="MGI"/>
</dbReference>
<dbReference type="GO" id="GO:0007605">
    <property type="term" value="P:sensory perception of sound"/>
    <property type="evidence" value="ECO:0000315"/>
    <property type="project" value="MGI"/>
</dbReference>
<dbReference type="GO" id="GO:0090659">
    <property type="term" value="P:walking behavior"/>
    <property type="evidence" value="ECO:0000315"/>
    <property type="project" value="MGI"/>
</dbReference>
<dbReference type="InterPro" id="IPR039706">
    <property type="entry name" value="MINAR1-like"/>
</dbReference>
<dbReference type="InterPro" id="IPR009626">
    <property type="entry name" value="MINAR1-like_C"/>
</dbReference>
<dbReference type="PANTHER" id="PTHR31530">
    <property type="entry name" value="MAJOR INTRINSICALLY DISORDERED NOTCH2-BINDING RECEPTOR 1 MINAR1 FAMILY MEMBER"/>
    <property type="match status" value="1"/>
</dbReference>
<dbReference type="PANTHER" id="PTHR31530:SF4">
    <property type="entry name" value="MAJOR INTRINSICALLY DISORDERED NOTCH2-BINDING RECEPTOR 1-LIKE"/>
    <property type="match status" value="1"/>
</dbReference>
<dbReference type="Pfam" id="PF06789">
    <property type="entry name" value="MINAR1_C"/>
    <property type="match status" value="1"/>
</dbReference>
<feature type="chain" id="PRO_0000157136" description="Major intrinsically disordered NOTCH2-binding receptor 1-like homolog">
    <location>
        <begin position="1"/>
        <end position="193"/>
    </location>
</feature>
<feature type="transmembrane region" description="Helical" evidence="3">
    <location>
        <begin position="172"/>
        <end position="192"/>
    </location>
</feature>
<feature type="modified residue" description="Phosphoserine" evidence="9">
    <location>
        <position position="82"/>
    </location>
</feature>
<feature type="glycosylation site" description="N-linked (GlcNAc...) asparagine" evidence="3">
    <location>
        <position position="128"/>
    </location>
</feature>
<feature type="splice variant" id="VSP_059939" description="In isoform 2.">
    <original>MKGDMDLSVLPNNNHPDKFLQLDVKSLMRSSTLLQASLARFPGGNYPATQHWQNLVYSQ</original>
    <variation>MPAYQEDREEDTCTIGE</variation>
    <location>
        <begin position="1"/>
        <end position="59"/>
    </location>
</feature>
<feature type="sequence conflict" description="In Ref. 1; BAC37921." evidence="7" ref="1">
    <original>K</original>
    <variation>E</variation>
    <location>
        <position position="158"/>
    </location>
</feature>
<name>MNARL_MOUSE</name>
<organism>
    <name type="scientific">Mus musculus</name>
    <name type="common">Mouse</name>
    <dbReference type="NCBI Taxonomy" id="10090"/>
    <lineage>
        <taxon>Eukaryota</taxon>
        <taxon>Metazoa</taxon>
        <taxon>Chordata</taxon>
        <taxon>Craniata</taxon>
        <taxon>Vertebrata</taxon>
        <taxon>Euteleostomi</taxon>
        <taxon>Mammalia</taxon>
        <taxon>Eutheria</taxon>
        <taxon>Euarchontoglires</taxon>
        <taxon>Glires</taxon>
        <taxon>Rodentia</taxon>
        <taxon>Myomorpha</taxon>
        <taxon>Muroidea</taxon>
        <taxon>Muridae</taxon>
        <taxon>Murinae</taxon>
        <taxon>Mus</taxon>
        <taxon>Mus</taxon>
    </lineage>
</organism>
<reference key="1">
    <citation type="journal article" date="2005" name="Science">
        <title>The transcriptional landscape of the mammalian genome.</title>
        <authorList>
            <person name="Carninci P."/>
            <person name="Kasukawa T."/>
            <person name="Katayama S."/>
            <person name="Gough J."/>
            <person name="Frith M.C."/>
            <person name="Maeda N."/>
            <person name="Oyama R."/>
            <person name="Ravasi T."/>
            <person name="Lenhard B."/>
            <person name="Wells C."/>
            <person name="Kodzius R."/>
            <person name="Shimokawa K."/>
            <person name="Bajic V.B."/>
            <person name="Brenner S.E."/>
            <person name="Batalov S."/>
            <person name="Forrest A.R."/>
            <person name="Zavolan M."/>
            <person name="Davis M.J."/>
            <person name="Wilming L.G."/>
            <person name="Aidinis V."/>
            <person name="Allen J.E."/>
            <person name="Ambesi-Impiombato A."/>
            <person name="Apweiler R."/>
            <person name="Aturaliya R.N."/>
            <person name="Bailey T.L."/>
            <person name="Bansal M."/>
            <person name="Baxter L."/>
            <person name="Beisel K.W."/>
            <person name="Bersano T."/>
            <person name="Bono H."/>
            <person name="Chalk A.M."/>
            <person name="Chiu K.P."/>
            <person name="Choudhary V."/>
            <person name="Christoffels A."/>
            <person name="Clutterbuck D.R."/>
            <person name="Crowe M.L."/>
            <person name="Dalla E."/>
            <person name="Dalrymple B.P."/>
            <person name="de Bono B."/>
            <person name="Della Gatta G."/>
            <person name="di Bernardo D."/>
            <person name="Down T."/>
            <person name="Engstrom P."/>
            <person name="Fagiolini M."/>
            <person name="Faulkner G."/>
            <person name="Fletcher C.F."/>
            <person name="Fukushima T."/>
            <person name="Furuno M."/>
            <person name="Futaki S."/>
            <person name="Gariboldi M."/>
            <person name="Georgii-Hemming P."/>
            <person name="Gingeras T.R."/>
            <person name="Gojobori T."/>
            <person name="Green R.E."/>
            <person name="Gustincich S."/>
            <person name="Harbers M."/>
            <person name="Hayashi Y."/>
            <person name="Hensch T.K."/>
            <person name="Hirokawa N."/>
            <person name="Hill D."/>
            <person name="Huminiecki L."/>
            <person name="Iacono M."/>
            <person name="Ikeo K."/>
            <person name="Iwama A."/>
            <person name="Ishikawa T."/>
            <person name="Jakt M."/>
            <person name="Kanapin A."/>
            <person name="Katoh M."/>
            <person name="Kawasawa Y."/>
            <person name="Kelso J."/>
            <person name="Kitamura H."/>
            <person name="Kitano H."/>
            <person name="Kollias G."/>
            <person name="Krishnan S.P."/>
            <person name="Kruger A."/>
            <person name="Kummerfeld S.K."/>
            <person name="Kurochkin I.V."/>
            <person name="Lareau L.F."/>
            <person name="Lazarevic D."/>
            <person name="Lipovich L."/>
            <person name="Liu J."/>
            <person name="Liuni S."/>
            <person name="McWilliam S."/>
            <person name="Madan Babu M."/>
            <person name="Madera M."/>
            <person name="Marchionni L."/>
            <person name="Matsuda H."/>
            <person name="Matsuzawa S."/>
            <person name="Miki H."/>
            <person name="Mignone F."/>
            <person name="Miyake S."/>
            <person name="Morris K."/>
            <person name="Mottagui-Tabar S."/>
            <person name="Mulder N."/>
            <person name="Nakano N."/>
            <person name="Nakauchi H."/>
            <person name="Ng P."/>
            <person name="Nilsson R."/>
            <person name="Nishiguchi S."/>
            <person name="Nishikawa S."/>
            <person name="Nori F."/>
            <person name="Ohara O."/>
            <person name="Okazaki Y."/>
            <person name="Orlando V."/>
            <person name="Pang K.C."/>
            <person name="Pavan W.J."/>
            <person name="Pavesi G."/>
            <person name="Pesole G."/>
            <person name="Petrovsky N."/>
            <person name="Piazza S."/>
            <person name="Reed J."/>
            <person name="Reid J.F."/>
            <person name="Ring B.Z."/>
            <person name="Ringwald M."/>
            <person name="Rost B."/>
            <person name="Ruan Y."/>
            <person name="Salzberg S.L."/>
            <person name="Sandelin A."/>
            <person name="Schneider C."/>
            <person name="Schoenbach C."/>
            <person name="Sekiguchi K."/>
            <person name="Semple C.A."/>
            <person name="Seno S."/>
            <person name="Sessa L."/>
            <person name="Sheng Y."/>
            <person name="Shibata Y."/>
            <person name="Shimada H."/>
            <person name="Shimada K."/>
            <person name="Silva D."/>
            <person name="Sinclair B."/>
            <person name="Sperling S."/>
            <person name="Stupka E."/>
            <person name="Sugiura K."/>
            <person name="Sultana R."/>
            <person name="Takenaka Y."/>
            <person name="Taki K."/>
            <person name="Tammoja K."/>
            <person name="Tan S.L."/>
            <person name="Tang S."/>
            <person name="Taylor M.S."/>
            <person name="Tegner J."/>
            <person name="Teichmann S.A."/>
            <person name="Ueda H.R."/>
            <person name="van Nimwegen E."/>
            <person name="Verardo R."/>
            <person name="Wei C.L."/>
            <person name="Yagi K."/>
            <person name="Yamanishi H."/>
            <person name="Zabarovsky E."/>
            <person name="Zhu S."/>
            <person name="Zimmer A."/>
            <person name="Hide W."/>
            <person name="Bult C."/>
            <person name="Grimmond S.M."/>
            <person name="Teasdale R.D."/>
            <person name="Liu E.T."/>
            <person name="Brusic V."/>
            <person name="Quackenbush J."/>
            <person name="Wahlestedt C."/>
            <person name="Mattick J.S."/>
            <person name="Hume D.A."/>
            <person name="Kai C."/>
            <person name="Sasaki D."/>
            <person name="Tomaru Y."/>
            <person name="Fukuda S."/>
            <person name="Kanamori-Katayama M."/>
            <person name="Suzuki M."/>
            <person name="Aoki J."/>
            <person name="Arakawa T."/>
            <person name="Iida J."/>
            <person name="Imamura K."/>
            <person name="Itoh M."/>
            <person name="Kato T."/>
            <person name="Kawaji H."/>
            <person name="Kawagashira N."/>
            <person name="Kawashima T."/>
            <person name="Kojima M."/>
            <person name="Kondo S."/>
            <person name="Konno H."/>
            <person name="Nakano K."/>
            <person name="Ninomiya N."/>
            <person name="Nishio T."/>
            <person name="Okada M."/>
            <person name="Plessy C."/>
            <person name="Shibata K."/>
            <person name="Shiraki T."/>
            <person name="Suzuki S."/>
            <person name="Tagami M."/>
            <person name="Waki K."/>
            <person name="Watahiki A."/>
            <person name="Okamura-Oho Y."/>
            <person name="Suzuki H."/>
            <person name="Kawai J."/>
            <person name="Hayashizaki Y."/>
        </authorList>
    </citation>
    <scope>NUCLEOTIDE SEQUENCE [LARGE SCALE MRNA] (ISOFORM 2)</scope>
    <source>
        <strain>C57BL/6J</strain>
        <tissue>Cerebellum</tissue>
    </source>
</reference>
<reference key="2">
    <citation type="journal article" date="2009" name="PLoS Biol.">
        <title>Lineage-specific biology revealed by a finished genome assembly of the mouse.</title>
        <authorList>
            <person name="Church D.M."/>
            <person name="Goodstadt L."/>
            <person name="Hillier L.W."/>
            <person name="Zody M.C."/>
            <person name="Goldstein S."/>
            <person name="She X."/>
            <person name="Bult C.J."/>
            <person name="Agarwala R."/>
            <person name="Cherry J.L."/>
            <person name="DiCuccio M."/>
            <person name="Hlavina W."/>
            <person name="Kapustin Y."/>
            <person name="Meric P."/>
            <person name="Maglott D."/>
            <person name="Birtle Z."/>
            <person name="Marques A.C."/>
            <person name="Graves T."/>
            <person name="Zhou S."/>
            <person name="Teague B."/>
            <person name="Potamousis K."/>
            <person name="Churas C."/>
            <person name="Place M."/>
            <person name="Herschleb J."/>
            <person name="Runnheim R."/>
            <person name="Forrest D."/>
            <person name="Amos-Landgraf J."/>
            <person name="Schwartz D.C."/>
            <person name="Cheng Z."/>
            <person name="Lindblad-Toh K."/>
            <person name="Eichler E.E."/>
            <person name="Ponting C.P."/>
        </authorList>
    </citation>
    <scope>NUCLEOTIDE SEQUENCE [LARGE SCALE GENOMIC DNA]</scope>
    <source>
        <strain>C57BL/6J</strain>
    </source>
</reference>
<reference key="3">
    <citation type="submission" date="2005-09" db="EMBL/GenBank/DDBJ databases">
        <authorList>
            <person name="Mural R.J."/>
            <person name="Adams M.D."/>
            <person name="Myers E.W."/>
            <person name="Smith H.O."/>
            <person name="Venter J.C."/>
        </authorList>
    </citation>
    <scope>NUCLEOTIDE SEQUENCE [LARGE SCALE GENOMIC DNA]</scope>
</reference>
<reference key="4">
    <citation type="journal article" date="2004" name="Genome Res.">
        <title>The status, quality, and expansion of the NIH full-length cDNA project: the Mammalian Gene Collection (MGC).</title>
        <authorList>
            <consortium name="The MGC Project Team"/>
        </authorList>
    </citation>
    <scope>NUCLEOTIDE SEQUENCE [LARGE SCALE MRNA] (ISOFORM 2)</scope>
    <source>
        <strain>C57BL/6J</strain>
        <tissue>Eye</tissue>
    </source>
</reference>
<reference key="5">
    <citation type="journal article" date="2004" name="Mol. Cell. Proteomics">
        <title>Phosphoproteomic analysis of the developing mouse brain.</title>
        <authorList>
            <person name="Ballif B.A."/>
            <person name="Villen J."/>
            <person name="Beausoleil S.A."/>
            <person name="Schwartz D."/>
            <person name="Gygi S.P."/>
        </authorList>
    </citation>
    <scope>PHOSPHORYLATION [LARGE SCALE ANALYSIS] AT SER-82</scope>
    <scope>IDENTIFICATION BY MASS SPECTROMETRY [LARGE SCALE ANALYSIS]</scope>
    <source>
        <tissue>Embryonic brain</tissue>
    </source>
</reference>
<reference key="6">
    <citation type="journal article" date="2020" name="Brain Commun.">
        <title>Loss of MINAR2 impairs motor function and causes Parkinson's disease-like symptoms in mice.</title>
        <authorList>
            <person name="Ho R.X."/>
            <person name="Amraei R."/>
            <person name="De La Cena K.O.C."/>
            <person name="Sutherland E.G."/>
            <person name="Mortazavi F."/>
            <person name="Stein T."/>
            <person name="Chitalia V."/>
            <person name="Rahimi N."/>
        </authorList>
    </citation>
    <scope>TISSUE SPECIFICITY</scope>
    <scope>DISRUPTION PHENOTYPE</scope>
</reference>
<reference key="7">
    <citation type="journal article" date="2022" name="Proc. Natl. Acad. Sci. U.S.A.">
        <title>Mutations in MINAR2 encoding membrane integral NOTCH2-associated receptor 2 cause deafness in humans and mice.</title>
        <authorList>
            <person name="Bademci G."/>
            <person name="Lachgar-Ruiz M."/>
            <person name="Deokar M."/>
            <person name="Zafeer M.F."/>
            <person name="Abad C."/>
            <person name="Yildirim Baylan M."/>
            <person name="Ingham N.J."/>
            <person name="Chen J."/>
            <person name="Sineni C.J."/>
            <person name="Vadgama N."/>
            <person name="Karakikes I."/>
            <person name="Guo S."/>
            <person name="Duman D."/>
            <person name="Singh N."/>
            <person name="Harlalka G."/>
            <person name="Jain S.P."/>
            <person name="Chioza B.A."/>
            <person name="Walz K."/>
            <person name="Steel K.P."/>
            <person name="Nasir J."/>
            <person name="Tekin M."/>
        </authorList>
    </citation>
    <scope>TISSUE SPECIFICITY</scope>
    <scope>DISRUPTION PHENOTYPE</scope>
</reference>
<comment type="function">
    <text evidence="1 2">Binds cholesterol and may regulate the distribution and homeostasis of cholesterol in hair cells (By similarity). May play a role in angiogenesis (By similarity).</text>
</comment>
<comment type="subunit">
    <text evidence="2">Interacts with NOTCH2.</text>
</comment>
<comment type="subcellular location">
    <subcellularLocation>
        <location evidence="1">Lysosome membrane</location>
        <topology evidence="3">Single-pass membrane protein</topology>
    </subcellularLocation>
    <subcellularLocation>
        <location evidence="2">Endoplasmic reticulum membrane</location>
        <topology evidence="3">Single-pass membrane protein</topology>
    </subcellularLocation>
    <text evidence="1">Localizes to the stereocilia and the apical region of hair cell, apparently around and just below the cuticular plate. Co-localized with cholesterol in the stereocilia.</text>
</comment>
<comment type="alternative products">
    <event type="alternative splicing"/>
    <isoform>
        <id>Q8C4X7-1</id>
        <name>1</name>
        <sequence type="displayed"/>
    </isoform>
    <isoform>
        <id>Q8C4X7-2</id>
        <name>2</name>
        <sequence type="described" ref="VSP_059939"/>
    </isoform>
</comment>
<comment type="tissue specificity">
    <text evidence="4 5">Widely expressed in the cortex and Purkinje cells of cerebellum (PubMed:32954300). Expressed in the inner ear, mainly in the hair cells, spiral ganglia, the spiral limbus, and the stria vascularis (PubMed:35727972).</text>
</comment>
<comment type="disruption phenotype">
    <text evidence="4 5">In an experimental Parkinson's disease model, homozygous knockout mice lacking Minar2 display severe motor deficits such as rigidity and bradykinesia, gait abnormalities, reduced spontaneous locomotor and exploratory behavior (PubMed:32954300). Homozygous knockout mice lacking Minar2 present with rapidly progressive sensorineural hearing loss (HL) associated with a reduction in outer hair cell stereocilia in the shortest row and degeneration of hair cells at a later age (PubMed:35727972).</text>
</comment>
<comment type="similarity">
    <text evidence="7">Belongs to the MINAR family.</text>
</comment>